<comment type="function">
    <text>Thought to be a Golgi-localized beta-glycan synthase that polymerize the backbones of noncellulosic polysaccharides (hemicelluloses) of plant cell wall.</text>
</comment>
<comment type="subcellular location">
    <subcellularLocation>
        <location evidence="3">Golgi apparatus membrane</location>
        <topology evidence="3">Multi-pass membrane protein</topology>
    </subcellularLocation>
</comment>
<comment type="similarity">
    <text evidence="3">Belongs to the glycosyltransferase 2 family. Plant cellulose synthase-like H subfamily.</text>
</comment>
<comment type="sequence caution" evidence="3">
    <conflict type="erroneous gene model prediction">
        <sequence resource="EMBL-CDS" id="CAH66410"/>
    </conflict>
</comment>
<proteinExistence type="inferred from homology"/>
<gene>
    <name type="primary">CSLH2</name>
    <name type="ORF">OSIGBa0093L02.6</name>
</gene>
<accession>Q7PC71</accession>
<accession>Q01LG1</accession>
<name>CSLH2_ORYSI</name>
<organism>
    <name type="scientific">Oryza sativa subsp. indica</name>
    <name type="common">Rice</name>
    <dbReference type="NCBI Taxonomy" id="39946"/>
    <lineage>
        <taxon>Eukaryota</taxon>
        <taxon>Viridiplantae</taxon>
        <taxon>Streptophyta</taxon>
        <taxon>Embryophyta</taxon>
        <taxon>Tracheophyta</taxon>
        <taxon>Spermatophyta</taxon>
        <taxon>Magnoliopsida</taxon>
        <taxon>Liliopsida</taxon>
        <taxon>Poales</taxon>
        <taxon>Poaceae</taxon>
        <taxon>BOP clade</taxon>
        <taxon>Oryzoideae</taxon>
        <taxon>Oryzeae</taxon>
        <taxon>Oryzinae</taxon>
        <taxon>Oryza</taxon>
        <taxon>Oryza sativa</taxon>
    </lineage>
</organism>
<dbReference type="EC" id="2.4.1.-"/>
<dbReference type="EMBL" id="CR855096">
    <property type="protein sequence ID" value="CAH66410.1"/>
    <property type="status" value="ALT_SEQ"/>
    <property type="molecule type" value="Genomic_DNA"/>
</dbReference>
<dbReference type="EMBL" id="BK000085">
    <property type="protein sequence ID" value="DAA01748.1"/>
    <property type="molecule type" value="Genomic_DNA"/>
</dbReference>
<dbReference type="SMR" id="Q7PC71"/>
<dbReference type="CAZy" id="GT2">
    <property type="family name" value="Glycosyltransferase Family 2"/>
</dbReference>
<dbReference type="GO" id="GO:0000139">
    <property type="term" value="C:Golgi membrane"/>
    <property type="evidence" value="ECO:0007669"/>
    <property type="project" value="UniProtKB-SubCell"/>
</dbReference>
<dbReference type="GO" id="GO:0016760">
    <property type="term" value="F:cellulose synthase (UDP-forming) activity"/>
    <property type="evidence" value="ECO:0007669"/>
    <property type="project" value="InterPro"/>
</dbReference>
<dbReference type="GO" id="GO:0071555">
    <property type="term" value="P:cell wall organization"/>
    <property type="evidence" value="ECO:0007669"/>
    <property type="project" value="UniProtKB-KW"/>
</dbReference>
<dbReference type="GO" id="GO:0030244">
    <property type="term" value="P:cellulose biosynthetic process"/>
    <property type="evidence" value="ECO:0007669"/>
    <property type="project" value="InterPro"/>
</dbReference>
<dbReference type="GO" id="GO:0071669">
    <property type="term" value="P:plant-type cell wall organization or biogenesis"/>
    <property type="evidence" value="ECO:0007669"/>
    <property type="project" value="UniProtKB-ARBA"/>
</dbReference>
<dbReference type="Gene3D" id="3.90.550.10">
    <property type="entry name" value="Spore Coat Polysaccharide Biosynthesis Protein SpsA, Chain A"/>
    <property type="match status" value="1"/>
</dbReference>
<dbReference type="InterPro" id="IPR005150">
    <property type="entry name" value="Cellulose_synth"/>
</dbReference>
<dbReference type="InterPro" id="IPR029044">
    <property type="entry name" value="Nucleotide-diphossugar_trans"/>
</dbReference>
<dbReference type="PANTHER" id="PTHR13301">
    <property type="entry name" value="X-BOX TRANSCRIPTION FACTOR-RELATED"/>
    <property type="match status" value="1"/>
</dbReference>
<dbReference type="Pfam" id="PF03552">
    <property type="entry name" value="Cellulose_synt"/>
    <property type="match status" value="3"/>
</dbReference>
<dbReference type="SUPFAM" id="SSF53448">
    <property type="entry name" value="Nucleotide-diphospho-sugar transferases"/>
    <property type="match status" value="1"/>
</dbReference>
<reference key="1">
    <citation type="journal article" date="2002" name="Nature">
        <title>Sequence and analysis of rice chromosome 4.</title>
        <authorList>
            <person name="Feng Q."/>
            <person name="Zhang Y."/>
            <person name="Hao P."/>
            <person name="Wang S."/>
            <person name="Fu G."/>
            <person name="Huang Y."/>
            <person name="Li Y."/>
            <person name="Zhu J."/>
            <person name="Liu Y."/>
            <person name="Hu X."/>
            <person name="Jia P."/>
            <person name="Zhang Y."/>
            <person name="Zhao Q."/>
            <person name="Ying K."/>
            <person name="Yu S."/>
            <person name="Tang Y."/>
            <person name="Weng Q."/>
            <person name="Zhang L."/>
            <person name="Lu Y."/>
            <person name="Mu J."/>
            <person name="Lu Y."/>
            <person name="Zhang L.S."/>
            <person name="Yu Z."/>
            <person name="Fan D."/>
            <person name="Liu X."/>
            <person name="Lu T."/>
            <person name="Li C."/>
            <person name="Wu Y."/>
            <person name="Sun T."/>
            <person name="Lei H."/>
            <person name="Li T."/>
            <person name="Hu H."/>
            <person name="Guan J."/>
            <person name="Wu M."/>
            <person name="Zhang R."/>
            <person name="Zhou B."/>
            <person name="Chen Z."/>
            <person name="Chen L."/>
            <person name="Jin Z."/>
            <person name="Wang R."/>
            <person name="Yin H."/>
            <person name="Cai Z."/>
            <person name="Ren S."/>
            <person name="Lv G."/>
            <person name="Gu W."/>
            <person name="Zhu G."/>
            <person name="Tu Y."/>
            <person name="Jia J."/>
            <person name="Zhang Y."/>
            <person name="Chen J."/>
            <person name="Kang H."/>
            <person name="Chen X."/>
            <person name="Shao C."/>
            <person name="Sun Y."/>
            <person name="Hu Q."/>
            <person name="Zhang X."/>
            <person name="Zhang W."/>
            <person name="Wang L."/>
            <person name="Ding C."/>
            <person name="Sheng H."/>
            <person name="Gu J."/>
            <person name="Chen S."/>
            <person name="Ni L."/>
            <person name="Zhu F."/>
            <person name="Chen W."/>
            <person name="Lan L."/>
            <person name="Lai Y."/>
            <person name="Cheng Z."/>
            <person name="Gu M."/>
            <person name="Jiang J."/>
            <person name="Li J."/>
            <person name="Hong G."/>
            <person name="Xue Y."/>
            <person name="Han B."/>
        </authorList>
    </citation>
    <scope>NUCLEOTIDE SEQUENCE [LARGE SCALE GENOMIC DNA]</scope>
    <source>
        <strain>cv. Guang-Lu-Ai No.4</strain>
    </source>
</reference>
<reference key="2">
    <citation type="journal article" date="2002" name="Plant Physiol.">
        <title>Cellulose synthase-like genes of rice.</title>
        <authorList>
            <person name="Hazen S.P."/>
            <person name="Scott-Craig J.S."/>
            <person name="Walton J.D."/>
        </authorList>
    </citation>
    <scope>IDENTIFICATION</scope>
</reference>
<sequence length="762" mass="83437">MAVVAAAAATGSTTRSGGGGGEGTRSGRKKPPPPPLQERVPLGRRAAWAWRLAGLAVLLLLLALLALRLLRHHGGAGGDAGVWRVALVCEAWFAALCALNVSAKWSPVRFVTRPENLVAEGRTPSTTAAEYGELPAVDMLVTTADPALEPPLVTVNTVLSLLALDYPRAGERLACYVSDDGCSPLTCHALREAAGFAAAWVPFCRRYGVAVRAPFRYFSSSSSPESGGPADRKFLDDWTFMKDEYDKLVRRIKNTDERSLLRHGGGEFFAEFLNVERRNHPTIVKTRVSAVMTNAPIMLNMDCDMFVNNPQAVLHAMCLLLGFDDEASSGFVQAPQRFYDALKDDPFGNQMECFFKRFISGVQGVQGAFYAGTGCFHRRKAVYGVPPNFNGAEREDTIGSSSYKELHTRFGNSEELNESARNIIWDLSSKPMVDISSRIEVAKAVSACNYDIGTCWGQEVGWVYGSLTEDILTGQRIHAMGWRSVLMVTEPPAFMGSAPIGGPACLTQFKRWATGQSEIIISRNNPILATMFKRLKFRQCLAYLIVLGWPLRAPFELCYGLLGPYCILTNQSFLPKASEDGFSVPLALFISYNTYNFMEYMACGLSARAWWNNHRMQRIISVSAWTLAFLTVLLKSLGLSETVFEVTGKDKSMSDDDDNTDGADPGRFTFDSLPVFIPVTALAMLNIVAVTVGACRVAFGTAEGVPCAPGIGEFMCCGWLVLCFFPFVRGIVWGKGSYGIPWSVKLKASLLVAMFVTFCKRN</sequence>
<feature type="chain" id="PRO_0000319411" description="Cellulose synthase-like protein H2">
    <location>
        <begin position="1"/>
        <end position="762"/>
    </location>
</feature>
<feature type="transmembrane region" description="Helical" evidence="1">
    <location>
        <begin position="47"/>
        <end position="67"/>
    </location>
</feature>
<feature type="transmembrane region" description="Helical" evidence="1">
    <location>
        <begin position="81"/>
        <end position="101"/>
    </location>
</feature>
<feature type="transmembrane region" description="Helical" evidence="1">
    <location>
        <begin position="541"/>
        <end position="561"/>
    </location>
</feature>
<feature type="transmembrane region" description="Helical" evidence="1">
    <location>
        <begin position="582"/>
        <end position="602"/>
    </location>
</feature>
<feature type="transmembrane region" description="Helical" evidence="1">
    <location>
        <begin position="619"/>
        <end position="639"/>
    </location>
</feature>
<feature type="transmembrane region" description="Helical" evidence="1">
    <location>
        <begin position="673"/>
        <end position="693"/>
    </location>
</feature>
<feature type="transmembrane region" description="Helical" evidence="1">
    <location>
        <begin position="708"/>
        <end position="728"/>
    </location>
</feature>
<feature type="transmembrane region" description="Helical" evidence="1">
    <location>
        <begin position="739"/>
        <end position="759"/>
    </location>
</feature>
<feature type="region of interest" description="Disordered" evidence="2">
    <location>
        <begin position="1"/>
        <end position="39"/>
    </location>
</feature>
<feature type="compositionally biased region" description="Low complexity" evidence="2">
    <location>
        <begin position="1"/>
        <end position="15"/>
    </location>
</feature>
<feature type="active site" evidence="1">
    <location>
        <position position="180"/>
    </location>
</feature>
<feature type="active site" evidence="1">
    <location>
        <position position="470"/>
    </location>
</feature>
<keyword id="KW-0961">Cell wall biogenesis/degradation</keyword>
<keyword id="KW-0328">Glycosyltransferase</keyword>
<keyword id="KW-0333">Golgi apparatus</keyword>
<keyword id="KW-0472">Membrane</keyword>
<keyword id="KW-0808">Transferase</keyword>
<keyword id="KW-0812">Transmembrane</keyword>
<keyword id="KW-1133">Transmembrane helix</keyword>
<protein>
    <recommendedName>
        <fullName>Cellulose synthase-like protein H2</fullName>
        <ecNumber>2.4.1.-</ecNumber>
    </recommendedName>
    <alternativeName>
        <fullName>OsCslH2</fullName>
    </alternativeName>
</protein>
<evidence type="ECO:0000255" key="1"/>
<evidence type="ECO:0000256" key="2">
    <source>
        <dbReference type="SAM" id="MobiDB-lite"/>
    </source>
</evidence>
<evidence type="ECO:0000305" key="3"/>